<keyword id="KW-0175">Coiled coil</keyword>
<keyword id="KW-0539">Nucleus</keyword>
<keyword id="KW-1185">Reference proteome</keyword>
<keyword id="KW-0687">Ribonucleoprotein</keyword>
<keyword id="KW-0690">Ribosome biogenesis</keyword>
<keyword id="KW-0698">rRNA processing</keyword>
<gene>
    <name type="primary">rrp36</name>
    <name type="ORF">AN6561</name>
</gene>
<accession>Q5AYR9</accession>
<accession>C8V0U4</accession>
<name>RRP36_EMENI</name>
<protein>
    <recommendedName>
        <fullName>rRNA biogenesis protein rrp36</fullName>
    </recommendedName>
    <alternativeName>
        <fullName>Ribosomal RNA-processing protein 36</fullName>
    </alternativeName>
</protein>
<organism>
    <name type="scientific">Emericella nidulans (strain FGSC A4 / ATCC 38163 / CBS 112.46 / NRRL 194 / M139)</name>
    <name type="common">Aspergillus nidulans</name>
    <dbReference type="NCBI Taxonomy" id="227321"/>
    <lineage>
        <taxon>Eukaryota</taxon>
        <taxon>Fungi</taxon>
        <taxon>Dikarya</taxon>
        <taxon>Ascomycota</taxon>
        <taxon>Pezizomycotina</taxon>
        <taxon>Eurotiomycetes</taxon>
        <taxon>Eurotiomycetidae</taxon>
        <taxon>Eurotiales</taxon>
        <taxon>Aspergillaceae</taxon>
        <taxon>Aspergillus</taxon>
        <taxon>Aspergillus subgen. Nidulantes</taxon>
    </lineage>
</organism>
<comment type="function">
    <text evidence="1">Component of the 90S pre-ribosome involved in the maturation of rRNAs. Required for early cleavages of the pre-RNAs in the 40S ribosomal subunit maturation pathway (By similarity).</text>
</comment>
<comment type="subunit">
    <text evidence="1">Associates with 90S and pre-40S pre-ribosomal particles.</text>
</comment>
<comment type="subcellular location">
    <subcellularLocation>
        <location evidence="1">Nucleus</location>
        <location evidence="1">Nucleolus</location>
    </subcellularLocation>
</comment>
<comment type="similarity">
    <text evidence="4">Belongs to the RRP36 family.</text>
</comment>
<sequence length="352" mass="39212">MAISDLLNRRVRAAPDEDEEVYSDESASGSEPPSDEGSSDESGSESGRDSLNGSDNDFDSESQNSEASDSISEDEDDDGDVKSSLNNISFGALAKAQASFAPQTKRRTKNLKDNEGTTASPLDDIRAKIQEAREQKRKASLASKDSSAKSRVDKPPPRTSKHAPTVQSSKYAVSRKRTIIEPPSVPKSRDPRFDPTIVGGRGGSGSSAPSDAYAFLDDYRAAELRALKEQLAKTKDVRRREALQREIRSMTDRLRTIENHKREKEILSEHKKREKQLIREGKKATPYFLKKSDIKKQALLKKYEGMKSKDRAKALERRRKKAAAKERKEMPMERRGLGGDSDAAPSKRRRMA</sequence>
<evidence type="ECO:0000250" key="1"/>
<evidence type="ECO:0000255" key="2"/>
<evidence type="ECO:0000256" key="3">
    <source>
        <dbReference type="SAM" id="MobiDB-lite"/>
    </source>
</evidence>
<evidence type="ECO:0000305" key="4"/>
<feature type="chain" id="PRO_0000397633" description="rRNA biogenesis protein rrp36">
    <location>
        <begin position="1"/>
        <end position="352"/>
    </location>
</feature>
<feature type="region of interest" description="Disordered" evidence="3">
    <location>
        <begin position="1"/>
        <end position="209"/>
    </location>
</feature>
<feature type="region of interest" description="Disordered" evidence="3">
    <location>
        <begin position="303"/>
        <end position="352"/>
    </location>
</feature>
<feature type="coiled-coil region" evidence="2">
    <location>
        <begin position="221"/>
        <end position="280"/>
    </location>
</feature>
<feature type="compositionally biased region" description="Acidic residues" evidence="3">
    <location>
        <begin position="33"/>
        <end position="43"/>
    </location>
</feature>
<feature type="compositionally biased region" description="Basic and acidic residues" evidence="3">
    <location>
        <begin position="123"/>
        <end position="134"/>
    </location>
</feature>
<feature type="compositionally biased region" description="Basic and acidic residues" evidence="3">
    <location>
        <begin position="146"/>
        <end position="156"/>
    </location>
</feature>
<feature type="compositionally biased region" description="Basic and acidic residues" evidence="3">
    <location>
        <begin position="303"/>
        <end position="315"/>
    </location>
</feature>
<feature type="compositionally biased region" description="Basic and acidic residues" evidence="3">
    <location>
        <begin position="323"/>
        <end position="337"/>
    </location>
</feature>
<proteinExistence type="inferred from homology"/>
<dbReference type="EMBL" id="AACD01000109">
    <property type="protein sequence ID" value="EAA57901.1"/>
    <property type="molecule type" value="Genomic_DNA"/>
</dbReference>
<dbReference type="EMBL" id="BN001301">
    <property type="protein sequence ID" value="CBF70989.1"/>
    <property type="molecule type" value="Genomic_DNA"/>
</dbReference>
<dbReference type="RefSeq" id="XP_664165.1">
    <property type="nucleotide sequence ID" value="XM_659073.1"/>
</dbReference>
<dbReference type="SMR" id="Q5AYR9"/>
<dbReference type="FunCoup" id="Q5AYR9">
    <property type="interactions" value="530"/>
</dbReference>
<dbReference type="STRING" id="227321.Q5AYR9"/>
<dbReference type="EnsemblFungi" id="CBF70989">
    <property type="protein sequence ID" value="CBF70989"/>
    <property type="gene ID" value="ANIA_06561"/>
</dbReference>
<dbReference type="KEGG" id="ani:ANIA_06561"/>
<dbReference type="VEuPathDB" id="FungiDB:AN6561"/>
<dbReference type="eggNOG" id="KOG3190">
    <property type="taxonomic scope" value="Eukaryota"/>
</dbReference>
<dbReference type="HOGENOM" id="CLU_048802_0_0_1"/>
<dbReference type="InParanoid" id="Q5AYR9"/>
<dbReference type="OMA" id="ERKEMPW"/>
<dbReference type="OrthoDB" id="448446at2759"/>
<dbReference type="Proteomes" id="UP000000560">
    <property type="component" value="Chromosome I"/>
</dbReference>
<dbReference type="GO" id="GO:0030686">
    <property type="term" value="C:90S preribosome"/>
    <property type="evidence" value="ECO:0000318"/>
    <property type="project" value="GO_Central"/>
</dbReference>
<dbReference type="GO" id="GO:0005730">
    <property type="term" value="C:nucleolus"/>
    <property type="evidence" value="ECO:0000318"/>
    <property type="project" value="GO_Central"/>
</dbReference>
<dbReference type="GO" id="GO:0000462">
    <property type="term" value="P:maturation of SSU-rRNA from tricistronic rRNA transcript (SSU-rRNA, 5.8S rRNA, LSU-rRNA)"/>
    <property type="evidence" value="ECO:0000318"/>
    <property type="project" value="GO_Central"/>
</dbReference>
<dbReference type="InterPro" id="IPR009292">
    <property type="entry name" value="RRP36"/>
</dbReference>
<dbReference type="PANTHER" id="PTHR21738">
    <property type="entry name" value="RIBOSOMAL RNA PROCESSING PROTEIN 36 HOMOLOG"/>
    <property type="match status" value="1"/>
</dbReference>
<dbReference type="PANTHER" id="PTHR21738:SF0">
    <property type="entry name" value="RIBOSOMAL RNA PROCESSING PROTEIN 36 HOMOLOG"/>
    <property type="match status" value="1"/>
</dbReference>
<dbReference type="Pfam" id="PF06102">
    <property type="entry name" value="RRP36"/>
    <property type="match status" value="1"/>
</dbReference>
<reference key="1">
    <citation type="journal article" date="2005" name="Nature">
        <title>Sequencing of Aspergillus nidulans and comparative analysis with A. fumigatus and A. oryzae.</title>
        <authorList>
            <person name="Galagan J.E."/>
            <person name="Calvo S.E."/>
            <person name="Cuomo C."/>
            <person name="Ma L.-J."/>
            <person name="Wortman J.R."/>
            <person name="Batzoglou S."/>
            <person name="Lee S.-I."/>
            <person name="Bastuerkmen M."/>
            <person name="Spevak C.C."/>
            <person name="Clutterbuck J."/>
            <person name="Kapitonov V."/>
            <person name="Jurka J."/>
            <person name="Scazzocchio C."/>
            <person name="Farman M.L."/>
            <person name="Butler J."/>
            <person name="Purcell S."/>
            <person name="Harris S."/>
            <person name="Braus G.H."/>
            <person name="Draht O."/>
            <person name="Busch S."/>
            <person name="D'Enfert C."/>
            <person name="Bouchier C."/>
            <person name="Goldman G.H."/>
            <person name="Bell-Pedersen D."/>
            <person name="Griffiths-Jones S."/>
            <person name="Doonan J.H."/>
            <person name="Yu J."/>
            <person name="Vienken K."/>
            <person name="Pain A."/>
            <person name="Freitag M."/>
            <person name="Selker E.U."/>
            <person name="Archer D.B."/>
            <person name="Penalva M.A."/>
            <person name="Oakley B.R."/>
            <person name="Momany M."/>
            <person name="Tanaka T."/>
            <person name="Kumagai T."/>
            <person name="Asai K."/>
            <person name="Machida M."/>
            <person name="Nierman W.C."/>
            <person name="Denning D.W."/>
            <person name="Caddick M.X."/>
            <person name="Hynes M."/>
            <person name="Paoletti M."/>
            <person name="Fischer R."/>
            <person name="Miller B.L."/>
            <person name="Dyer P.S."/>
            <person name="Sachs M.S."/>
            <person name="Osmani S.A."/>
            <person name="Birren B.W."/>
        </authorList>
    </citation>
    <scope>NUCLEOTIDE SEQUENCE [LARGE SCALE GENOMIC DNA]</scope>
    <source>
        <strain>FGSC A4 / ATCC 38163 / CBS 112.46 / NRRL 194 / M139</strain>
    </source>
</reference>
<reference key="2">
    <citation type="journal article" date="2009" name="Fungal Genet. Biol.">
        <title>The 2008 update of the Aspergillus nidulans genome annotation: a community effort.</title>
        <authorList>
            <person name="Wortman J.R."/>
            <person name="Gilsenan J.M."/>
            <person name="Joardar V."/>
            <person name="Deegan J."/>
            <person name="Clutterbuck J."/>
            <person name="Andersen M.R."/>
            <person name="Archer D."/>
            <person name="Bencina M."/>
            <person name="Braus G."/>
            <person name="Coutinho P."/>
            <person name="von Dohren H."/>
            <person name="Doonan J."/>
            <person name="Driessen A.J."/>
            <person name="Durek P."/>
            <person name="Espeso E."/>
            <person name="Fekete E."/>
            <person name="Flipphi M."/>
            <person name="Estrada C.G."/>
            <person name="Geysens S."/>
            <person name="Goldman G."/>
            <person name="de Groot P.W."/>
            <person name="Hansen K."/>
            <person name="Harris S.D."/>
            <person name="Heinekamp T."/>
            <person name="Helmstaedt K."/>
            <person name="Henrissat B."/>
            <person name="Hofmann G."/>
            <person name="Homan T."/>
            <person name="Horio T."/>
            <person name="Horiuchi H."/>
            <person name="James S."/>
            <person name="Jones M."/>
            <person name="Karaffa L."/>
            <person name="Karanyi Z."/>
            <person name="Kato M."/>
            <person name="Keller N."/>
            <person name="Kelly D.E."/>
            <person name="Kiel J.A."/>
            <person name="Kim J.M."/>
            <person name="van der Klei I.J."/>
            <person name="Klis F.M."/>
            <person name="Kovalchuk A."/>
            <person name="Krasevec N."/>
            <person name="Kubicek C.P."/>
            <person name="Liu B."/>
            <person name="Maccabe A."/>
            <person name="Meyer V."/>
            <person name="Mirabito P."/>
            <person name="Miskei M."/>
            <person name="Mos M."/>
            <person name="Mullins J."/>
            <person name="Nelson D.R."/>
            <person name="Nielsen J."/>
            <person name="Oakley B.R."/>
            <person name="Osmani S.A."/>
            <person name="Pakula T."/>
            <person name="Paszewski A."/>
            <person name="Paulsen I."/>
            <person name="Pilsyk S."/>
            <person name="Pocsi I."/>
            <person name="Punt P.J."/>
            <person name="Ram A.F."/>
            <person name="Ren Q."/>
            <person name="Robellet X."/>
            <person name="Robson G."/>
            <person name="Seiboth B."/>
            <person name="van Solingen P."/>
            <person name="Specht T."/>
            <person name="Sun J."/>
            <person name="Taheri-Talesh N."/>
            <person name="Takeshita N."/>
            <person name="Ussery D."/>
            <person name="vanKuyk P.A."/>
            <person name="Visser H."/>
            <person name="van de Vondervoort P.J."/>
            <person name="de Vries R.P."/>
            <person name="Walton J."/>
            <person name="Xiang X."/>
            <person name="Xiong Y."/>
            <person name="Zeng A.P."/>
            <person name="Brandt B.W."/>
            <person name="Cornell M.J."/>
            <person name="van den Hondel C.A."/>
            <person name="Visser J."/>
            <person name="Oliver S.G."/>
            <person name="Turner G."/>
        </authorList>
    </citation>
    <scope>GENOME REANNOTATION</scope>
    <source>
        <strain>FGSC A4 / ATCC 38163 / CBS 112.46 / NRRL 194 / M139</strain>
    </source>
</reference>